<name>TIG_DEHM1</name>
<feature type="chain" id="PRO_0000256550" description="Trigger factor">
    <location>
        <begin position="1"/>
        <end position="448"/>
    </location>
</feature>
<feature type="domain" description="PPIase FKBP-type" evidence="1">
    <location>
        <begin position="160"/>
        <end position="245"/>
    </location>
</feature>
<sequence>MKVTDKKIEGCQASITVEMDPAEVEAGLSKTYRRLVKKVEIPGFRKGKTPRDVFEKYLGREKMLDEVVDDIVPEACQQAINDDEEIKPFAAPKIAMVTTEPFVFSARIPLPPVVELGDYKTIRAAKEKVEITEENIDTVIDQVLHQRATWEKAERPVKMGDMLLMKVESTLNGEPYLNREDMQYSVREEAIYPAPGFGEHLVDMVVGEPKEFSIVFPEDHARAELAGKTAAFKVTIQEIREEKLPELNDAFAHELNPEFNTLAELRQRIRENMQERQDDQAQAKFEDQIVEALIKMSKIDYPEVMVETELDQIIEQQLQRLQSTIKSPEEFRATLSQLSPADMQQRYRPLAEQRVASSLALGKLATTENLIPSDEEVDAEIERLTQDSGDKKEEEKAFYNKPDTRDRLIQLLTARKTMAFIDEIALQPALEAVEPKSDEGEKTEEADK</sequence>
<accession>Q3Z8J9</accession>
<organism>
    <name type="scientific">Dehalococcoides mccartyi (strain ATCC BAA-2266 / KCTC 15142 / 195)</name>
    <name type="common">Dehalococcoides ethenogenes (strain 195)</name>
    <dbReference type="NCBI Taxonomy" id="243164"/>
    <lineage>
        <taxon>Bacteria</taxon>
        <taxon>Bacillati</taxon>
        <taxon>Chloroflexota</taxon>
        <taxon>Dehalococcoidia</taxon>
        <taxon>Dehalococcoidales</taxon>
        <taxon>Dehalococcoidaceae</taxon>
        <taxon>Dehalococcoides</taxon>
    </lineage>
</organism>
<proteinExistence type="inferred from homology"/>
<protein>
    <recommendedName>
        <fullName evidence="1">Trigger factor</fullName>
        <shortName evidence="1">TF</shortName>
        <ecNumber evidence="1">5.2.1.8</ecNumber>
    </recommendedName>
    <alternativeName>
        <fullName evidence="1">PPIase</fullName>
    </alternativeName>
</protein>
<evidence type="ECO:0000255" key="1">
    <source>
        <dbReference type="HAMAP-Rule" id="MF_00303"/>
    </source>
</evidence>
<comment type="function">
    <text evidence="1">Involved in protein export. Acts as a chaperone by maintaining the newly synthesized protein in an open conformation. Functions as a peptidyl-prolyl cis-trans isomerase.</text>
</comment>
<comment type="catalytic activity">
    <reaction evidence="1">
        <text>[protein]-peptidylproline (omega=180) = [protein]-peptidylproline (omega=0)</text>
        <dbReference type="Rhea" id="RHEA:16237"/>
        <dbReference type="Rhea" id="RHEA-COMP:10747"/>
        <dbReference type="Rhea" id="RHEA-COMP:10748"/>
        <dbReference type="ChEBI" id="CHEBI:83833"/>
        <dbReference type="ChEBI" id="CHEBI:83834"/>
        <dbReference type="EC" id="5.2.1.8"/>
    </reaction>
</comment>
<comment type="subcellular location">
    <subcellularLocation>
        <location>Cytoplasm</location>
    </subcellularLocation>
    <text evidence="1">About half TF is bound to the ribosome near the polypeptide exit tunnel while the other half is free in the cytoplasm.</text>
</comment>
<comment type="domain">
    <text evidence="1">Consists of 3 domains; the N-terminus binds the ribosome, the middle domain has PPIase activity, while the C-terminus has intrinsic chaperone activity on its own.</text>
</comment>
<comment type="similarity">
    <text evidence="1">Belongs to the FKBP-type PPIase family. Tig subfamily.</text>
</comment>
<keyword id="KW-0131">Cell cycle</keyword>
<keyword id="KW-0132">Cell division</keyword>
<keyword id="KW-0143">Chaperone</keyword>
<keyword id="KW-0963">Cytoplasm</keyword>
<keyword id="KW-0413">Isomerase</keyword>
<keyword id="KW-0697">Rotamase</keyword>
<dbReference type="EC" id="5.2.1.8" evidence="1"/>
<dbReference type="EMBL" id="CP000027">
    <property type="protein sequence ID" value="AAW39988.1"/>
    <property type="molecule type" value="Genomic_DNA"/>
</dbReference>
<dbReference type="RefSeq" id="WP_010936451.1">
    <property type="nucleotide sequence ID" value="NC_002936.3"/>
</dbReference>
<dbReference type="SMR" id="Q3Z8J9"/>
<dbReference type="FunCoup" id="Q3Z8J9">
    <property type="interactions" value="394"/>
</dbReference>
<dbReference type="STRING" id="243164.DET0709"/>
<dbReference type="GeneID" id="3229950"/>
<dbReference type="KEGG" id="det:DET0709"/>
<dbReference type="PATRIC" id="fig|243164.10.peg.683"/>
<dbReference type="eggNOG" id="COG0544">
    <property type="taxonomic scope" value="Bacteria"/>
</dbReference>
<dbReference type="HOGENOM" id="CLU_033058_3_2_0"/>
<dbReference type="InParanoid" id="Q3Z8J9"/>
<dbReference type="Proteomes" id="UP000008289">
    <property type="component" value="Chromosome"/>
</dbReference>
<dbReference type="GO" id="GO:0005737">
    <property type="term" value="C:cytoplasm"/>
    <property type="evidence" value="ECO:0007669"/>
    <property type="project" value="UniProtKB-SubCell"/>
</dbReference>
<dbReference type="GO" id="GO:0003755">
    <property type="term" value="F:peptidyl-prolyl cis-trans isomerase activity"/>
    <property type="evidence" value="ECO:0007669"/>
    <property type="project" value="UniProtKB-UniRule"/>
</dbReference>
<dbReference type="GO" id="GO:0044183">
    <property type="term" value="F:protein folding chaperone"/>
    <property type="evidence" value="ECO:0007669"/>
    <property type="project" value="TreeGrafter"/>
</dbReference>
<dbReference type="GO" id="GO:0043022">
    <property type="term" value="F:ribosome binding"/>
    <property type="evidence" value="ECO:0007669"/>
    <property type="project" value="TreeGrafter"/>
</dbReference>
<dbReference type="GO" id="GO:0051083">
    <property type="term" value="P:'de novo' cotranslational protein folding"/>
    <property type="evidence" value="ECO:0007669"/>
    <property type="project" value="TreeGrafter"/>
</dbReference>
<dbReference type="GO" id="GO:0051301">
    <property type="term" value="P:cell division"/>
    <property type="evidence" value="ECO:0007669"/>
    <property type="project" value="UniProtKB-KW"/>
</dbReference>
<dbReference type="GO" id="GO:0061077">
    <property type="term" value="P:chaperone-mediated protein folding"/>
    <property type="evidence" value="ECO:0007669"/>
    <property type="project" value="TreeGrafter"/>
</dbReference>
<dbReference type="GO" id="GO:0015031">
    <property type="term" value="P:protein transport"/>
    <property type="evidence" value="ECO:0007669"/>
    <property type="project" value="UniProtKB-UniRule"/>
</dbReference>
<dbReference type="GO" id="GO:0043335">
    <property type="term" value="P:protein unfolding"/>
    <property type="evidence" value="ECO:0007669"/>
    <property type="project" value="TreeGrafter"/>
</dbReference>
<dbReference type="Gene3D" id="3.10.50.40">
    <property type="match status" value="1"/>
</dbReference>
<dbReference type="Gene3D" id="3.30.70.1050">
    <property type="entry name" value="Trigger factor ribosome-binding domain"/>
    <property type="match status" value="1"/>
</dbReference>
<dbReference type="Gene3D" id="1.10.3120.10">
    <property type="entry name" value="Trigger factor, C-terminal domain"/>
    <property type="match status" value="1"/>
</dbReference>
<dbReference type="HAMAP" id="MF_00303">
    <property type="entry name" value="Trigger_factor_Tig"/>
    <property type="match status" value="1"/>
</dbReference>
<dbReference type="InterPro" id="IPR046357">
    <property type="entry name" value="PPIase_dom_sf"/>
</dbReference>
<dbReference type="InterPro" id="IPR005215">
    <property type="entry name" value="Trig_fac"/>
</dbReference>
<dbReference type="InterPro" id="IPR008880">
    <property type="entry name" value="Trigger_fac_C"/>
</dbReference>
<dbReference type="InterPro" id="IPR037041">
    <property type="entry name" value="Trigger_fac_C_sf"/>
</dbReference>
<dbReference type="InterPro" id="IPR008881">
    <property type="entry name" value="Trigger_fac_ribosome-bd_bac"/>
</dbReference>
<dbReference type="InterPro" id="IPR036611">
    <property type="entry name" value="Trigger_fac_ribosome-bd_sf"/>
</dbReference>
<dbReference type="InterPro" id="IPR027304">
    <property type="entry name" value="Trigger_fact/SurA_dom_sf"/>
</dbReference>
<dbReference type="NCBIfam" id="TIGR00115">
    <property type="entry name" value="tig"/>
    <property type="match status" value="1"/>
</dbReference>
<dbReference type="PANTHER" id="PTHR30560">
    <property type="entry name" value="TRIGGER FACTOR CHAPERONE AND PEPTIDYL-PROLYL CIS/TRANS ISOMERASE"/>
    <property type="match status" value="1"/>
</dbReference>
<dbReference type="PANTHER" id="PTHR30560:SF3">
    <property type="entry name" value="TRIGGER FACTOR-LIKE PROTEIN TIG, CHLOROPLASTIC"/>
    <property type="match status" value="1"/>
</dbReference>
<dbReference type="Pfam" id="PF05698">
    <property type="entry name" value="Trigger_C"/>
    <property type="match status" value="1"/>
</dbReference>
<dbReference type="Pfam" id="PF05697">
    <property type="entry name" value="Trigger_N"/>
    <property type="match status" value="1"/>
</dbReference>
<dbReference type="PIRSF" id="PIRSF003095">
    <property type="entry name" value="Trigger_factor"/>
    <property type="match status" value="1"/>
</dbReference>
<dbReference type="SUPFAM" id="SSF54534">
    <property type="entry name" value="FKBP-like"/>
    <property type="match status" value="1"/>
</dbReference>
<dbReference type="SUPFAM" id="SSF109998">
    <property type="entry name" value="Triger factor/SurA peptide-binding domain-like"/>
    <property type="match status" value="1"/>
</dbReference>
<dbReference type="SUPFAM" id="SSF102735">
    <property type="entry name" value="Trigger factor ribosome-binding domain"/>
    <property type="match status" value="1"/>
</dbReference>
<reference key="1">
    <citation type="journal article" date="2005" name="Science">
        <title>Genome sequence of the PCE-dechlorinating bacterium Dehalococcoides ethenogenes.</title>
        <authorList>
            <person name="Seshadri R."/>
            <person name="Adrian L."/>
            <person name="Fouts D.E."/>
            <person name="Eisen J.A."/>
            <person name="Phillippy A.M."/>
            <person name="Methe B.A."/>
            <person name="Ward N.L."/>
            <person name="Nelson W.C."/>
            <person name="DeBoy R.T."/>
            <person name="Khouri H.M."/>
            <person name="Kolonay J.F."/>
            <person name="Dodson R.J."/>
            <person name="Daugherty S.C."/>
            <person name="Brinkac L.M."/>
            <person name="Sullivan S.A."/>
            <person name="Madupu R."/>
            <person name="Nelson K.E."/>
            <person name="Kang K.H."/>
            <person name="Impraim M."/>
            <person name="Tran K."/>
            <person name="Robinson J.M."/>
            <person name="Forberger H.A."/>
            <person name="Fraser C.M."/>
            <person name="Zinder S.H."/>
            <person name="Heidelberg J.F."/>
        </authorList>
    </citation>
    <scope>NUCLEOTIDE SEQUENCE [LARGE SCALE GENOMIC DNA]</scope>
    <source>
        <strain>ATCC BAA-2266 / KCTC 15142 / 195</strain>
    </source>
</reference>
<gene>
    <name evidence="1" type="primary">tig</name>
    <name type="ordered locus">DET0709</name>
</gene>